<name>YRD1_CAEEL</name>
<reference key="1">
    <citation type="journal article" date="1998" name="Science">
        <title>Genome sequence of the nematode C. elegans: a platform for investigating biology.</title>
        <authorList>
            <consortium name="The C. elegans sequencing consortium"/>
        </authorList>
    </citation>
    <scope>NUCLEOTIDE SEQUENCE [LARGE SCALE GENOMIC DNA]</scope>
    <source>
        <strain>Bristol N2</strain>
    </source>
</reference>
<gene>
    <name type="ORF">K02A2.1</name>
</gene>
<proteinExistence type="predicted"/>
<feature type="chain" id="PRO_0000065394" description="Uncharacterized protein K02A2.1">
    <location>
        <begin position="1"/>
        <end position="158"/>
    </location>
</feature>
<accession>Q09571</accession>
<keyword id="KW-1185">Reference proteome</keyword>
<protein>
    <recommendedName>
        <fullName>Uncharacterized protein K02A2.1</fullName>
    </recommendedName>
</protein>
<organism>
    <name type="scientific">Caenorhabditis elegans</name>
    <dbReference type="NCBI Taxonomy" id="6239"/>
    <lineage>
        <taxon>Eukaryota</taxon>
        <taxon>Metazoa</taxon>
        <taxon>Ecdysozoa</taxon>
        <taxon>Nematoda</taxon>
        <taxon>Chromadorea</taxon>
        <taxon>Rhabditida</taxon>
        <taxon>Rhabditina</taxon>
        <taxon>Rhabditomorpha</taxon>
        <taxon>Rhabditoidea</taxon>
        <taxon>Rhabditidae</taxon>
        <taxon>Peloderinae</taxon>
        <taxon>Caenorhabditis</taxon>
    </lineage>
</organism>
<dbReference type="EMBL" id="FO080416">
    <property type="protein sequence ID" value="CCD63535.1"/>
    <property type="molecule type" value="Genomic_DNA"/>
</dbReference>
<dbReference type="RefSeq" id="NP_495556.1">
    <property type="nucleotide sequence ID" value="NM_063155.1"/>
</dbReference>
<dbReference type="SMR" id="Q09571"/>
<dbReference type="FunCoup" id="Q09571">
    <property type="interactions" value="6"/>
</dbReference>
<dbReference type="STRING" id="6239.K02A2.1.1"/>
<dbReference type="ESTHER" id="caeel-q7m3k8">
    <property type="family name" value="Dienelactone_hydrolase"/>
</dbReference>
<dbReference type="PaxDb" id="6239-K02A2.1"/>
<dbReference type="EnsemblMetazoa" id="K02A2.1.1">
    <property type="protein sequence ID" value="K02A2.1.1"/>
    <property type="gene ID" value="WBGene00019288"/>
</dbReference>
<dbReference type="GeneID" id="186856"/>
<dbReference type="KEGG" id="cel:CELE_K02A2.1"/>
<dbReference type="UCSC" id="K02A2.1">
    <property type="organism name" value="c. elegans"/>
</dbReference>
<dbReference type="AGR" id="WB:WBGene00019288"/>
<dbReference type="CTD" id="186856"/>
<dbReference type="WormBase" id="K02A2.1">
    <property type="protein sequence ID" value="CE21012"/>
    <property type="gene ID" value="WBGene00019288"/>
</dbReference>
<dbReference type="eggNOG" id="ENOG502S55Z">
    <property type="taxonomic scope" value="Eukaryota"/>
</dbReference>
<dbReference type="GeneTree" id="ENSGT00390000011963"/>
<dbReference type="HOGENOM" id="CLU_1658271_0_0_1"/>
<dbReference type="InParanoid" id="Q09571"/>
<dbReference type="OMA" id="KFESEMN"/>
<dbReference type="OrthoDB" id="17560at2759"/>
<dbReference type="PhylomeDB" id="Q09571"/>
<dbReference type="PRO" id="PR:Q09571"/>
<dbReference type="Proteomes" id="UP000001940">
    <property type="component" value="Chromosome II"/>
</dbReference>
<dbReference type="Bgee" id="WBGene00019288">
    <property type="expression patterns" value="Expressed in embryo and 1 other cell type or tissue"/>
</dbReference>
<dbReference type="GO" id="GO:0016787">
    <property type="term" value="F:hydrolase activity"/>
    <property type="evidence" value="ECO:0000318"/>
    <property type="project" value="GO_Central"/>
</dbReference>
<dbReference type="Gene3D" id="3.40.50.1820">
    <property type="entry name" value="alpha/beta hydrolase"/>
    <property type="match status" value="1"/>
</dbReference>
<dbReference type="InterPro" id="IPR029058">
    <property type="entry name" value="AB_hydrolase_fold"/>
</dbReference>
<dbReference type="InterPro" id="IPR002925">
    <property type="entry name" value="Dienelactn_hydro"/>
</dbReference>
<dbReference type="InterPro" id="IPR050261">
    <property type="entry name" value="FrsA_esterase"/>
</dbReference>
<dbReference type="PANTHER" id="PTHR22946:SF2">
    <property type="entry name" value="DIENELACTONE HYDROLASE DOMAIN-CONTAINING PROTEIN"/>
    <property type="match status" value="1"/>
</dbReference>
<dbReference type="PANTHER" id="PTHR22946">
    <property type="entry name" value="DIENELACTONE HYDROLASE DOMAIN-CONTAINING PROTEIN-RELATED"/>
    <property type="match status" value="1"/>
</dbReference>
<dbReference type="Pfam" id="PF01738">
    <property type="entry name" value="DLH"/>
    <property type="match status" value="1"/>
</dbReference>
<dbReference type="SUPFAM" id="SSF53474">
    <property type="entry name" value="alpha/beta-Hydrolases"/>
    <property type="match status" value="1"/>
</dbReference>
<sequence length="158" mass="17251">MTSDRNGKLKPRLEAALNALKSVPCVDKQKLGAFGFCIGGLCSLDCARYRFDGIRAVISFHGTLTPIEGIPLELLDDNSIQVHHGDADKHVSKVTVDAFHEEMRARNSDFVFISHGKAMHSFTDPESAGIAPSGVGYDANAEKRSWKATLEFLKEAFA</sequence>